<comment type="function">
    <text evidence="1">Cell wall formation. Catalyzes the transfer of a GlcNAc subunit on undecaprenyl-pyrophosphoryl-MurNAc-pentapeptide (lipid intermediate I) to form undecaprenyl-pyrophosphoryl-MurNAc-(pentapeptide)GlcNAc (lipid intermediate II).</text>
</comment>
<comment type="catalytic activity">
    <reaction evidence="1">
        <text>di-trans,octa-cis-undecaprenyl diphospho-N-acetyl-alpha-D-muramoyl-L-alanyl-D-glutamyl-meso-2,6-diaminopimeloyl-D-alanyl-D-alanine + UDP-N-acetyl-alpha-D-glucosamine = di-trans,octa-cis-undecaprenyl diphospho-[N-acetyl-alpha-D-glucosaminyl-(1-&gt;4)]-N-acetyl-alpha-D-muramoyl-L-alanyl-D-glutamyl-meso-2,6-diaminopimeloyl-D-alanyl-D-alanine + UDP + H(+)</text>
        <dbReference type="Rhea" id="RHEA:31227"/>
        <dbReference type="ChEBI" id="CHEBI:15378"/>
        <dbReference type="ChEBI" id="CHEBI:57705"/>
        <dbReference type="ChEBI" id="CHEBI:58223"/>
        <dbReference type="ChEBI" id="CHEBI:61387"/>
        <dbReference type="ChEBI" id="CHEBI:61388"/>
        <dbReference type="EC" id="2.4.1.227"/>
    </reaction>
</comment>
<comment type="pathway">
    <text evidence="1">Cell wall biogenesis; peptidoglycan biosynthesis.</text>
</comment>
<comment type="subcellular location">
    <subcellularLocation>
        <location evidence="1">Cell inner membrane</location>
        <topology evidence="1">Peripheral membrane protein</topology>
        <orientation evidence="1">Cytoplasmic side</orientation>
    </subcellularLocation>
</comment>
<comment type="similarity">
    <text evidence="1">Belongs to the glycosyltransferase 28 family. MurG subfamily.</text>
</comment>
<proteinExistence type="inferred from homology"/>
<reference key="1">
    <citation type="journal article" date="2006" name="Science">
        <title>Genomic islands and the ecology and evolution of Prochlorococcus.</title>
        <authorList>
            <person name="Coleman M.L."/>
            <person name="Sullivan M.B."/>
            <person name="Martiny A.C."/>
            <person name="Steglich C."/>
            <person name="Barry K."/>
            <person name="Delong E.F."/>
            <person name="Chisholm S.W."/>
        </authorList>
    </citation>
    <scope>NUCLEOTIDE SEQUENCE [LARGE SCALE GENOMIC DNA]</scope>
    <source>
        <strain>MIT 9312</strain>
    </source>
</reference>
<sequence length="363" mass="41692">MSKKNNLLVAASGTGGHIFPALAVSKEVEDEWNIHWLGVRQRLDANFIPKKYNLRTLNIKTPRKNIFLFYQYIEILISTFQIIRILKEKKINLVFTTGGYISAPTIVASKLLRIPIIIHESNVIPGMVTKYFGFLCNYVLLGFKKTNSYLKNCKTIFTGTPLREQFYKFNFLPEWVPKGRGPLLIVMGGSQGAKAINQILYESLEFLIKKQFRIVHIIGESNQQPFHVKNSKNYIQKKFTNEIAALIQNCDLVISRSGAGTINELIEAEKPSILIPYPDSKNNHQEKNALILAESGGSVLINQNKISKEVFEETLERIFKIKSKKGKNHYEILDLMKKNMENNNKIKSNNEIKKFINYFLKEF</sequence>
<name>MURG_PROM9</name>
<protein>
    <recommendedName>
        <fullName evidence="1">UDP-N-acetylglucosamine--N-acetylmuramyl-(pentapeptide) pyrophosphoryl-undecaprenol N-acetylglucosamine transferase</fullName>
        <ecNumber evidence="1">2.4.1.227</ecNumber>
    </recommendedName>
    <alternativeName>
        <fullName evidence="1">Undecaprenyl-PP-MurNAc-pentapeptide-UDPGlcNAc GlcNAc transferase</fullName>
    </alternativeName>
</protein>
<feature type="chain" id="PRO_0000315140" description="UDP-N-acetylglucosamine--N-acetylmuramyl-(pentapeptide) pyrophosphoryl-undecaprenol N-acetylglucosamine transferase">
    <location>
        <begin position="1"/>
        <end position="363"/>
    </location>
</feature>
<feature type="binding site" evidence="1">
    <location>
        <begin position="14"/>
        <end position="16"/>
    </location>
    <ligand>
        <name>UDP-N-acetyl-alpha-D-glucosamine</name>
        <dbReference type="ChEBI" id="CHEBI:57705"/>
    </ligand>
</feature>
<feature type="binding site" evidence="1">
    <location>
        <position position="122"/>
    </location>
    <ligand>
        <name>UDP-N-acetyl-alpha-D-glucosamine</name>
        <dbReference type="ChEBI" id="CHEBI:57705"/>
    </ligand>
</feature>
<feature type="binding site" evidence="1">
    <location>
        <position position="163"/>
    </location>
    <ligand>
        <name>UDP-N-acetyl-alpha-D-glucosamine</name>
        <dbReference type="ChEBI" id="CHEBI:57705"/>
    </ligand>
</feature>
<feature type="binding site" evidence="1">
    <location>
        <position position="190"/>
    </location>
    <ligand>
        <name>UDP-N-acetyl-alpha-D-glucosamine</name>
        <dbReference type="ChEBI" id="CHEBI:57705"/>
    </ligand>
</feature>
<feature type="binding site" evidence="1">
    <location>
        <position position="285"/>
    </location>
    <ligand>
        <name>UDP-N-acetyl-alpha-D-glucosamine</name>
        <dbReference type="ChEBI" id="CHEBI:57705"/>
    </ligand>
</feature>
<accession>Q31CY4</accession>
<gene>
    <name evidence="1" type="primary">murG</name>
    <name type="ordered locus">PMT9312_0199</name>
</gene>
<organism>
    <name type="scientific">Prochlorococcus marinus (strain MIT 9312)</name>
    <dbReference type="NCBI Taxonomy" id="74546"/>
    <lineage>
        <taxon>Bacteria</taxon>
        <taxon>Bacillati</taxon>
        <taxon>Cyanobacteriota</taxon>
        <taxon>Cyanophyceae</taxon>
        <taxon>Synechococcales</taxon>
        <taxon>Prochlorococcaceae</taxon>
        <taxon>Prochlorococcus</taxon>
    </lineage>
</organism>
<dbReference type="EC" id="2.4.1.227" evidence="1"/>
<dbReference type="EMBL" id="CP000111">
    <property type="protein sequence ID" value="ABB49261.1"/>
    <property type="molecule type" value="Genomic_DNA"/>
</dbReference>
<dbReference type="RefSeq" id="WP_011375765.1">
    <property type="nucleotide sequence ID" value="NC_007577.1"/>
</dbReference>
<dbReference type="SMR" id="Q31CY4"/>
<dbReference type="STRING" id="74546.PMT9312_0199"/>
<dbReference type="CAZy" id="GT28">
    <property type="family name" value="Glycosyltransferase Family 28"/>
</dbReference>
<dbReference type="KEGG" id="pmi:PMT9312_0199"/>
<dbReference type="eggNOG" id="COG0707">
    <property type="taxonomic scope" value="Bacteria"/>
</dbReference>
<dbReference type="HOGENOM" id="CLU_037404_2_1_3"/>
<dbReference type="OrthoDB" id="9808936at2"/>
<dbReference type="UniPathway" id="UPA00219"/>
<dbReference type="Proteomes" id="UP000002715">
    <property type="component" value="Chromosome"/>
</dbReference>
<dbReference type="GO" id="GO:0005886">
    <property type="term" value="C:plasma membrane"/>
    <property type="evidence" value="ECO:0007669"/>
    <property type="project" value="UniProtKB-SubCell"/>
</dbReference>
<dbReference type="GO" id="GO:0051991">
    <property type="term" value="F:UDP-N-acetyl-D-glucosamine:N-acetylmuramoyl-L-alanyl-D-glutamyl-meso-2,6-diaminopimelyl-D-alanyl-D-alanine-diphosphoundecaprenol 4-beta-N-acetylglucosaminlytransferase activity"/>
    <property type="evidence" value="ECO:0007669"/>
    <property type="project" value="RHEA"/>
</dbReference>
<dbReference type="GO" id="GO:0050511">
    <property type="term" value="F:undecaprenyldiphospho-muramoylpentapeptide beta-N-acetylglucosaminyltransferase activity"/>
    <property type="evidence" value="ECO:0007669"/>
    <property type="project" value="UniProtKB-UniRule"/>
</dbReference>
<dbReference type="GO" id="GO:0005975">
    <property type="term" value="P:carbohydrate metabolic process"/>
    <property type="evidence" value="ECO:0007669"/>
    <property type="project" value="InterPro"/>
</dbReference>
<dbReference type="GO" id="GO:0051301">
    <property type="term" value="P:cell division"/>
    <property type="evidence" value="ECO:0007669"/>
    <property type="project" value="UniProtKB-KW"/>
</dbReference>
<dbReference type="GO" id="GO:0071555">
    <property type="term" value="P:cell wall organization"/>
    <property type="evidence" value="ECO:0007669"/>
    <property type="project" value="UniProtKB-KW"/>
</dbReference>
<dbReference type="GO" id="GO:0030259">
    <property type="term" value="P:lipid glycosylation"/>
    <property type="evidence" value="ECO:0007669"/>
    <property type="project" value="UniProtKB-UniRule"/>
</dbReference>
<dbReference type="GO" id="GO:0009252">
    <property type="term" value="P:peptidoglycan biosynthetic process"/>
    <property type="evidence" value="ECO:0007669"/>
    <property type="project" value="UniProtKB-UniRule"/>
</dbReference>
<dbReference type="GO" id="GO:0008360">
    <property type="term" value="P:regulation of cell shape"/>
    <property type="evidence" value="ECO:0007669"/>
    <property type="project" value="UniProtKB-KW"/>
</dbReference>
<dbReference type="CDD" id="cd03785">
    <property type="entry name" value="GT28_MurG"/>
    <property type="match status" value="1"/>
</dbReference>
<dbReference type="Gene3D" id="3.40.50.2000">
    <property type="entry name" value="Glycogen Phosphorylase B"/>
    <property type="match status" value="2"/>
</dbReference>
<dbReference type="HAMAP" id="MF_00033">
    <property type="entry name" value="MurG"/>
    <property type="match status" value="1"/>
</dbReference>
<dbReference type="InterPro" id="IPR006009">
    <property type="entry name" value="GlcNAc_MurG"/>
</dbReference>
<dbReference type="InterPro" id="IPR007235">
    <property type="entry name" value="Glyco_trans_28_C"/>
</dbReference>
<dbReference type="InterPro" id="IPR004276">
    <property type="entry name" value="GlycoTrans_28_N"/>
</dbReference>
<dbReference type="PANTHER" id="PTHR21015:SF22">
    <property type="entry name" value="GLYCOSYLTRANSFERASE"/>
    <property type="match status" value="1"/>
</dbReference>
<dbReference type="PANTHER" id="PTHR21015">
    <property type="entry name" value="UDP-N-ACETYLGLUCOSAMINE--N-ACETYLMURAMYL-(PENTAPEPTIDE) PYROPHOSPHORYL-UNDECAPRENOL N-ACETYLGLUCOSAMINE TRANSFERASE 1"/>
    <property type="match status" value="1"/>
</dbReference>
<dbReference type="Pfam" id="PF04101">
    <property type="entry name" value="Glyco_tran_28_C"/>
    <property type="match status" value="1"/>
</dbReference>
<dbReference type="Pfam" id="PF03033">
    <property type="entry name" value="Glyco_transf_28"/>
    <property type="match status" value="1"/>
</dbReference>
<dbReference type="SUPFAM" id="SSF53756">
    <property type="entry name" value="UDP-Glycosyltransferase/glycogen phosphorylase"/>
    <property type="match status" value="1"/>
</dbReference>
<keyword id="KW-0131">Cell cycle</keyword>
<keyword id="KW-0132">Cell division</keyword>
<keyword id="KW-0997">Cell inner membrane</keyword>
<keyword id="KW-1003">Cell membrane</keyword>
<keyword id="KW-0133">Cell shape</keyword>
<keyword id="KW-0961">Cell wall biogenesis/degradation</keyword>
<keyword id="KW-0328">Glycosyltransferase</keyword>
<keyword id="KW-0472">Membrane</keyword>
<keyword id="KW-0573">Peptidoglycan synthesis</keyword>
<keyword id="KW-0808">Transferase</keyword>
<evidence type="ECO:0000255" key="1">
    <source>
        <dbReference type="HAMAP-Rule" id="MF_00033"/>
    </source>
</evidence>